<keyword id="KW-0067">ATP-binding</keyword>
<keyword id="KW-0903">Direct protein sequencing</keyword>
<keyword id="KW-0377">Hydrogenosome</keyword>
<keyword id="KW-0418">Kinase</keyword>
<keyword id="KW-0547">Nucleotide-binding</keyword>
<keyword id="KW-0808">Transferase</keyword>
<reference key="1">
    <citation type="journal article" date="1994" name="Mol. Biochem. Parasitol.">
        <title>Primary structure of the hydrogenosomal adenylate kinase of Trichomonas vaginalis and its phylogenetic relationships.</title>
        <authorList>
            <person name="Laenge S."/>
            <person name="Rozario C."/>
            <person name="Mueller M."/>
        </authorList>
    </citation>
    <scope>NUCLEOTIDE SEQUENCE [GENOMIC DNA]</scope>
    <scope>PROTEIN SEQUENCE OF 10-48</scope>
    <scope>SUBCELLULAR LOCATION</scope>
    <source>
        <strain>ATCC 30001 / NIH-C1</strain>
    </source>
</reference>
<dbReference type="EC" id="2.7.4.3"/>
<dbReference type="EMBL" id="U07203">
    <property type="protein sequence ID" value="AAC46483.1"/>
    <property type="molecule type" value="Genomic_DNA"/>
</dbReference>
<dbReference type="SMR" id="P49983"/>
<dbReference type="VEuPathDB" id="TrichDB:TVAG_489800"/>
<dbReference type="VEuPathDB" id="TrichDB:TVAGG3_0238780"/>
<dbReference type="eggNOG" id="KOG3078">
    <property type="taxonomic scope" value="Eukaryota"/>
</dbReference>
<dbReference type="GO" id="GO:0042566">
    <property type="term" value="C:hydrogenosome"/>
    <property type="evidence" value="ECO:0007669"/>
    <property type="project" value="UniProtKB-SubCell"/>
</dbReference>
<dbReference type="GO" id="GO:0004017">
    <property type="term" value="F:adenylate kinase activity"/>
    <property type="evidence" value="ECO:0007669"/>
    <property type="project" value="UniProtKB-EC"/>
</dbReference>
<dbReference type="GO" id="GO:0005524">
    <property type="term" value="F:ATP binding"/>
    <property type="evidence" value="ECO:0007669"/>
    <property type="project" value="UniProtKB-KW"/>
</dbReference>
<dbReference type="CDD" id="cd01428">
    <property type="entry name" value="ADK"/>
    <property type="match status" value="1"/>
</dbReference>
<dbReference type="FunFam" id="3.40.50.300:FF:000106">
    <property type="entry name" value="Adenylate kinase mitochondrial"/>
    <property type="match status" value="1"/>
</dbReference>
<dbReference type="Gene3D" id="3.40.50.300">
    <property type="entry name" value="P-loop containing nucleotide triphosphate hydrolases"/>
    <property type="match status" value="1"/>
</dbReference>
<dbReference type="HAMAP" id="MF_00235">
    <property type="entry name" value="Adenylate_kinase_Adk"/>
    <property type="match status" value="1"/>
</dbReference>
<dbReference type="InterPro" id="IPR006259">
    <property type="entry name" value="Adenyl_kin_sub"/>
</dbReference>
<dbReference type="InterPro" id="IPR000850">
    <property type="entry name" value="Adenylat/UMP-CMP_kin"/>
</dbReference>
<dbReference type="InterPro" id="IPR033690">
    <property type="entry name" value="Adenylat_kinase_CS"/>
</dbReference>
<dbReference type="InterPro" id="IPR007862">
    <property type="entry name" value="Adenylate_kinase_lid-dom"/>
</dbReference>
<dbReference type="InterPro" id="IPR036193">
    <property type="entry name" value="ADK_active_lid_dom_sf"/>
</dbReference>
<dbReference type="InterPro" id="IPR027417">
    <property type="entry name" value="P-loop_NTPase"/>
</dbReference>
<dbReference type="NCBIfam" id="TIGR01351">
    <property type="entry name" value="adk"/>
    <property type="match status" value="1"/>
</dbReference>
<dbReference type="PANTHER" id="PTHR23359">
    <property type="entry name" value="NUCLEOTIDE KINASE"/>
    <property type="match status" value="1"/>
</dbReference>
<dbReference type="Pfam" id="PF00406">
    <property type="entry name" value="ADK"/>
    <property type="match status" value="1"/>
</dbReference>
<dbReference type="Pfam" id="PF05191">
    <property type="entry name" value="ADK_lid"/>
    <property type="match status" value="1"/>
</dbReference>
<dbReference type="PRINTS" id="PR00094">
    <property type="entry name" value="ADENYLTKNASE"/>
</dbReference>
<dbReference type="SUPFAM" id="SSF57774">
    <property type="entry name" value="Microbial and mitochondrial ADK, insert 'zinc finger' domain"/>
    <property type="match status" value="1"/>
</dbReference>
<dbReference type="SUPFAM" id="SSF52540">
    <property type="entry name" value="P-loop containing nucleoside triphosphate hydrolases"/>
    <property type="match status" value="1"/>
</dbReference>
<dbReference type="PROSITE" id="PS00113">
    <property type="entry name" value="ADENYLATE_KINASE"/>
    <property type="match status" value="1"/>
</dbReference>
<sequence>MLSTLAKRFASGKKDRMVVFFGPPGVGKGTQAKLLEKEFNLYQISTGDALRAEIRGQTPLGKRVKGIIESGGLVDDDTIMDILQACMQKNTDNNGYIFDGIPRTIGQVEKLDALLAKMGTPLTHVLYLSVNIDELRERVCGRLFHPGSGRVYHKVTNPPKKPMTDDITGEPLIIRKDDTPEVFNQRMNQYFGTFQPCIDYYSKKGILQTFPVDGQPIDVVHKKLHAALQ</sequence>
<proteinExistence type="evidence at protein level"/>
<evidence type="ECO:0000250" key="1">
    <source>
        <dbReference type="UniProtKB" id="P69441"/>
    </source>
</evidence>
<evidence type="ECO:0000269" key="2">
    <source>
    </source>
</evidence>
<evidence type="ECO:0000305" key="3"/>
<comment type="function">
    <text evidence="1">Catalyzes the reversible transfer of the terminal phosphate group between ATP and AMP. Plays an important role in cellular energy homeostasis and in adenine nucleotide metabolism.</text>
</comment>
<comment type="catalytic activity">
    <reaction evidence="1">
        <text>AMP + ATP = 2 ADP</text>
        <dbReference type="Rhea" id="RHEA:12973"/>
        <dbReference type="ChEBI" id="CHEBI:30616"/>
        <dbReference type="ChEBI" id="CHEBI:456215"/>
        <dbReference type="ChEBI" id="CHEBI:456216"/>
        <dbReference type="EC" id="2.7.4.3"/>
    </reaction>
</comment>
<comment type="subcellular location">
    <subcellularLocation>
        <location evidence="2">Hydrogenosome</location>
    </subcellularLocation>
</comment>
<comment type="similarity">
    <text evidence="3">Belongs to the adenylate kinase family.</text>
</comment>
<organism>
    <name type="scientific">Trichomonas vaginalis</name>
    <dbReference type="NCBI Taxonomy" id="5722"/>
    <lineage>
        <taxon>Eukaryota</taxon>
        <taxon>Metamonada</taxon>
        <taxon>Parabasalia</taxon>
        <taxon>Trichomonadida</taxon>
        <taxon>Trichomonadidae</taxon>
        <taxon>Trichomonas</taxon>
    </lineage>
</organism>
<feature type="propeptide" id="PRO_0000016552" evidence="2">
    <location>
        <begin position="1"/>
        <end position="9"/>
    </location>
</feature>
<feature type="chain" id="PRO_0000016553" description="Adenylate kinase">
    <location>
        <begin position="10"/>
        <end position="229"/>
    </location>
</feature>
<feature type="region of interest" description="NMP" evidence="1">
    <location>
        <begin position="45"/>
        <end position="74"/>
    </location>
</feature>
<feature type="region of interest" description="LID" evidence="1">
    <location>
        <begin position="141"/>
        <end position="178"/>
    </location>
</feature>
<feature type="binding site" evidence="1">
    <location>
        <begin position="25"/>
        <end position="30"/>
    </location>
    <ligand>
        <name>ATP</name>
        <dbReference type="ChEBI" id="CHEBI:30616"/>
    </ligand>
</feature>
<feature type="binding site" evidence="1">
    <location>
        <position position="46"/>
    </location>
    <ligand>
        <name>AMP</name>
        <dbReference type="ChEBI" id="CHEBI:456215"/>
    </ligand>
</feature>
<feature type="binding site" evidence="1">
    <location>
        <position position="51"/>
    </location>
    <ligand>
        <name>AMP</name>
        <dbReference type="ChEBI" id="CHEBI:456215"/>
    </ligand>
</feature>
<feature type="binding site" evidence="1">
    <location>
        <begin position="72"/>
        <end position="74"/>
    </location>
    <ligand>
        <name>AMP</name>
        <dbReference type="ChEBI" id="CHEBI:456215"/>
    </ligand>
</feature>
<feature type="binding site" evidence="1">
    <location>
        <begin position="100"/>
        <end position="103"/>
    </location>
    <ligand>
        <name>AMP</name>
        <dbReference type="ChEBI" id="CHEBI:456215"/>
    </ligand>
</feature>
<feature type="binding site" evidence="1">
    <location>
        <position position="107"/>
    </location>
    <ligand>
        <name>AMP</name>
        <dbReference type="ChEBI" id="CHEBI:456215"/>
    </ligand>
</feature>
<feature type="binding site" evidence="1">
    <location>
        <position position="142"/>
    </location>
    <ligand>
        <name>ATP</name>
        <dbReference type="ChEBI" id="CHEBI:30616"/>
    </ligand>
</feature>
<feature type="binding site" evidence="1">
    <location>
        <position position="175"/>
    </location>
    <ligand>
        <name>AMP</name>
        <dbReference type="ChEBI" id="CHEBI:456215"/>
    </ligand>
</feature>
<feature type="binding site" evidence="1">
    <location>
        <position position="186"/>
    </location>
    <ligand>
        <name>AMP</name>
        <dbReference type="ChEBI" id="CHEBI:456215"/>
    </ligand>
</feature>
<feature type="binding site" evidence="1">
    <location>
        <position position="214"/>
    </location>
    <ligand>
        <name>ATP</name>
        <dbReference type="ChEBI" id="CHEBI:30616"/>
    </ligand>
</feature>
<accession>P49983</accession>
<protein>
    <recommendedName>
        <fullName>Adenylate kinase</fullName>
        <shortName>AK</shortName>
        <ecNumber>2.7.4.3</ecNumber>
    </recommendedName>
    <alternativeName>
        <fullName>ATP-AMP transphosphorylase</fullName>
    </alternativeName>
    <alternativeName>
        <fullName>ATP:AMP phosphotransferase</fullName>
    </alternativeName>
    <alternativeName>
        <fullName>Adenylate monophosphate kinase</fullName>
    </alternativeName>
</protein>
<name>KADH_TRIVA</name>